<organism>
    <name type="scientific">Yarrowia lipolytica (strain CLIB 122 / E 150)</name>
    <name type="common">Yeast</name>
    <name type="synonym">Candida lipolytica</name>
    <dbReference type="NCBI Taxonomy" id="284591"/>
    <lineage>
        <taxon>Eukaryota</taxon>
        <taxon>Fungi</taxon>
        <taxon>Dikarya</taxon>
        <taxon>Ascomycota</taxon>
        <taxon>Saccharomycotina</taxon>
        <taxon>Dipodascomycetes</taxon>
        <taxon>Dipodascales</taxon>
        <taxon>Dipodascales incertae sedis</taxon>
        <taxon>Yarrowia</taxon>
    </lineage>
</organism>
<gene>
    <name type="ordered locus">YALI0D23243g</name>
</gene>
<keyword id="KW-0963">Cytoplasm</keyword>
<keyword id="KW-0396">Initiation factor</keyword>
<keyword id="KW-0648">Protein biosynthesis</keyword>
<keyword id="KW-1185">Reference proteome</keyword>
<proteinExistence type="inferred from homology"/>
<dbReference type="EMBL" id="CR382130">
    <property type="protein sequence ID" value="CAG81382.1"/>
    <property type="molecule type" value="Genomic_DNA"/>
</dbReference>
<dbReference type="RefSeq" id="XP_503182.1">
    <property type="nucleotide sequence ID" value="XM_503182.1"/>
</dbReference>
<dbReference type="SMR" id="Q6C830"/>
<dbReference type="STRING" id="284591.Q6C830"/>
<dbReference type="EnsemblFungi" id="CAG81382">
    <property type="protein sequence ID" value="CAG81382"/>
    <property type="gene ID" value="YALI0_D23243g"/>
</dbReference>
<dbReference type="KEGG" id="yli:2911050"/>
<dbReference type="VEuPathDB" id="FungiDB:YALI0_D23243g"/>
<dbReference type="HOGENOM" id="CLU_076723_0_0_1"/>
<dbReference type="InParanoid" id="Q6C830"/>
<dbReference type="OMA" id="GDDLCAD"/>
<dbReference type="OrthoDB" id="111239at4891"/>
<dbReference type="Proteomes" id="UP000001300">
    <property type="component" value="Chromosome D"/>
</dbReference>
<dbReference type="GO" id="GO:0016282">
    <property type="term" value="C:eukaryotic 43S preinitiation complex"/>
    <property type="evidence" value="ECO:0007669"/>
    <property type="project" value="UniProtKB-UniRule"/>
</dbReference>
<dbReference type="GO" id="GO:0033290">
    <property type="term" value="C:eukaryotic 48S preinitiation complex"/>
    <property type="evidence" value="ECO:0007669"/>
    <property type="project" value="UniProtKB-UniRule"/>
</dbReference>
<dbReference type="GO" id="GO:0005852">
    <property type="term" value="C:eukaryotic translation initiation factor 3 complex"/>
    <property type="evidence" value="ECO:0000318"/>
    <property type="project" value="GO_Central"/>
</dbReference>
<dbReference type="GO" id="GO:0008541">
    <property type="term" value="C:proteasome regulatory particle, lid subcomplex"/>
    <property type="evidence" value="ECO:0007669"/>
    <property type="project" value="UniProtKB-ARBA"/>
</dbReference>
<dbReference type="GO" id="GO:0043022">
    <property type="term" value="F:ribosome binding"/>
    <property type="evidence" value="ECO:0007669"/>
    <property type="project" value="InterPro"/>
</dbReference>
<dbReference type="GO" id="GO:0003723">
    <property type="term" value="F:RNA binding"/>
    <property type="evidence" value="ECO:0007669"/>
    <property type="project" value="UniProtKB-UniRule"/>
</dbReference>
<dbReference type="GO" id="GO:0003743">
    <property type="term" value="F:translation initiation factor activity"/>
    <property type="evidence" value="ECO:0007669"/>
    <property type="project" value="UniProtKB-UniRule"/>
</dbReference>
<dbReference type="GO" id="GO:0001732">
    <property type="term" value="P:formation of cytoplasmic translation initiation complex"/>
    <property type="evidence" value="ECO:0007669"/>
    <property type="project" value="UniProtKB-UniRule"/>
</dbReference>
<dbReference type="GO" id="GO:0006446">
    <property type="term" value="P:regulation of translational initiation"/>
    <property type="evidence" value="ECO:0007669"/>
    <property type="project" value="InterPro"/>
</dbReference>
<dbReference type="Gene3D" id="1.25.40.250">
    <property type="entry name" value="ARM repeat, domain 1"/>
    <property type="match status" value="1"/>
</dbReference>
<dbReference type="Gene3D" id="1.10.10.10">
    <property type="entry name" value="Winged helix-like DNA-binding domain superfamily/Winged helix DNA-binding domain"/>
    <property type="match status" value="1"/>
</dbReference>
<dbReference type="HAMAP" id="MF_03010">
    <property type="entry name" value="eIF3k"/>
    <property type="match status" value="1"/>
</dbReference>
<dbReference type="InterPro" id="IPR016024">
    <property type="entry name" value="ARM-type_fold"/>
</dbReference>
<dbReference type="InterPro" id="IPR033464">
    <property type="entry name" value="CSN8_PSD8_EIF3K"/>
</dbReference>
<dbReference type="InterPro" id="IPR009374">
    <property type="entry name" value="eIF3k"/>
</dbReference>
<dbReference type="InterPro" id="IPR000717">
    <property type="entry name" value="PCI_dom"/>
</dbReference>
<dbReference type="InterPro" id="IPR016020">
    <property type="entry name" value="Transl_init_fac_sub12_N_euk"/>
</dbReference>
<dbReference type="InterPro" id="IPR036388">
    <property type="entry name" value="WH-like_DNA-bd_sf"/>
</dbReference>
<dbReference type="InterPro" id="IPR036390">
    <property type="entry name" value="WH_DNA-bd_sf"/>
</dbReference>
<dbReference type="PANTHER" id="PTHR13022">
    <property type="entry name" value="EUKARYOTIC TRANSLATION INITIATION FACTOR 3 SUBUNIT 11"/>
    <property type="match status" value="1"/>
</dbReference>
<dbReference type="PANTHER" id="PTHR13022:SF0">
    <property type="entry name" value="EUKARYOTIC TRANSLATION INITIATION FACTOR 3 SUBUNIT K"/>
    <property type="match status" value="1"/>
</dbReference>
<dbReference type="Pfam" id="PF10075">
    <property type="entry name" value="CSN8_PSD8_EIF3K"/>
    <property type="match status" value="1"/>
</dbReference>
<dbReference type="SUPFAM" id="SSF48371">
    <property type="entry name" value="ARM repeat"/>
    <property type="match status" value="1"/>
</dbReference>
<dbReference type="SUPFAM" id="SSF46785">
    <property type="entry name" value="Winged helix' DNA-binding domain"/>
    <property type="match status" value="1"/>
</dbReference>
<dbReference type="PROSITE" id="PS50250">
    <property type="entry name" value="PCI"/>
    <property type="match status" value="1"/>
</dbReference>
<evidence type="ECO:0000255" key="1">
    <source>
        <dbReference type="HAMAP-Rule" id="MF_03010"/>
    </source>
</evidence>
<evidence type="ECO:0000255" key="2">
    <source>
        <dbReference type="PROSITE-ProRule" id="PRU01185"/>
    </source>
</evidence>
<name>EIF3K_YARLI</name>
<reference key="1">
    <citation type="journal article" date="2004" name="Nature">
        <title>Genome evolution in yeasts.</title>
        <authorList>
            <person name="Dujon B."/>
            <person name="Sherman D."/>
            <person name="Fischer G."/>
            <person name="Durrens P."/>
            <person name="Casaregola S."/>
            <person name="Lafontaine I."/>
            <person name="de Montigny J."/>
            <person name="Marck C."/>
            <person name="Neuveglise C."/>
            <person name="Talla E."/>
            <person name="Goffard N."/>
            <person name="Frangeul L."/>
            <person name="Aigle M."/>
            <person name="Anthouard V."/>
            <person name="Babour A."/>
            <person name="Barbe V."/>
            <person name="Barnay S."/>
            <person name="Blanchin S."/>
            <person name="Beckerich J.-M."/>
            <person name="Beyne E."/>
            <person name="Bleykasten C."/>
            <person name="Boisrame A."/>
            <person name="Boyer J."/>
            <person name="Cattolico L."/>
            <person name="Confanioleri F."/>
            <person name="de Daruvar A."/>
            <person name="Despons L."/>
            <person name="Fabre E."/>
            <person name="Fairhead C."/>
            <person name="Ferry-Dumazet H."/>
            <person name="Groppi A."/>
            <person name="Hantraye F."/>
            <person name="Hennequin C."/>
            <person name="Jauniaux N."/>
            <person name="Joyet P."/>
            <person name="Kachouri R."/>
            <person name="Kerrest A."/>
            <person name="Koszul R."/>
            <person name="Lemaire M."/>
            <person name="Lesur I."/>
            <person name="Ma L."/>
            <person name="Muller H."/>
            <person name="Nicaud J.-M."/>
            <person name="Nikolski M."/>
            <person name="Oztas S."/>
            <person name="Ozier-Kalogeropoulos O."/>
            <person name="Pellenz S."/>
            <person name="Potier S."/>
            <person name="Richard G.-F."/>
            <person name="Straub M.-L."/>
            <person name="Suleau A."/>
            <person name="Swennen D."/>
            <person name="Tekaia F."/>
            <person name="Wesolowski-Louvel M."/>
            <person name="Westhof E."/>
            <person name="Wirth B."/>
            <person name="Zeniou-Meyer M."/>
            <person name="Zivanovic Y."/>
            <person name="Bolotin-Fukuhara M."/>
            <person name="Thierry A."/>
            <person name="Bouchier C."/>
            <person name="Caudron B."/>
            <person name="Scarpelli C."/>
            <person name="Gaillardin C."/>
            <person name="Weissenbach J."/>
            <person name="Wincker P."/>
            <person name="Souciet J.-L."/>
        </authorList>
    </citation>
    <scope>NUCLEOTIDE SEQUENCE [LARGE SCALE GENOMIC DNA]</scope>
    <source>
        <strain>CLIB 122 / E 150</strain>
    </source>
</reference>
<comment type="function">
    <text evidence="1">Component of the eukaryotic translation initiation factor 3 (eIF-3) complex, which is involved in protein synthesis of a specialized repertoire of mRNAs and, together with other initiation factors, stimulates binding of mRNA and methionyl-tRNAi to the 40S ribosome. The eIF-3 complex specifically targets and initiates translation of a subset of mRNAs involved in cell proliferation.</text>
</comment>
<comment type="subunit">
    <text evidence="1">Component of the eukaryotic translation initiation factor 3 (eIF-3) complex.</text>
</comment>
<comment type="subcellular location">
    <subcellularLocation>
        <location evidence="1">Cytoplasm</location>
    </subcellularLocation>
</comment>
<comment type="similarity">
    <text evidence="1">Belongs to the eIF-3 subunit K family.</text>
</comment>
<protein>
    <recommendedName>
        <fullName evidence="1">Eukaryotic translation initiation factor 3 subunit K</fullName>
        <shortName evidence="1">eIF3k</shortName>
    </recommendedName>
    <alternativeName>
        <fullName evidence="1">eIF-3 p25</fullName>
    </alternativeName>
</protein>
<feature type="chain" id="PRO_0000365065" description="Eukaryotic translation initiation factor 3 subunit K">
    <location>
        <begin position="1"/>
        <end position="234"/>
    </location>
</feature>
<feature type="domain" description="PCI" evidence="2">
    <location>
        <begin position="46"/>
        <end position="219"/>
    </location>
</feature>
<accession>Q6C830</accession>
<sequence>MDTLSKKPEQRPEEITAILSSLDRYNPEKISILQEYATTQCADQHSDIEANLALLKLLQFQQQPNPNKEDIICNILSMALANFLTSDFTTALHVLPSYVLDSPAADTLAESIQKLFHLYTLLDGCRFPEFWAVYERDDAHADITADVADFENLVRISITRAVDISSQAIHKDVFRSWLNLSDNKFADYVKELGWKVEGETVVVPPNKENEAKPATTTESIKIEQISRLLKRTNE</sequence>